<comment type="subcellular location">
    <subcellularLocation>
        <location evidence="1">Cell inner membrane</location>
        <topology evidence="1">Multi-pass membrane protein</topology>
    </subcellularLocation>
</comment>
<comment type="similarity">
    <text evidence="1">Belongs to the UPF0761 family.</text>
</comment>
<dbReference type="EMBL" id="CR543861">
    <property type="protein sequence ID" value="CAG69857.1"/>
    <property type="molecule type" value="Genomic_DNA"/>
</dbReference>
<dbReference type="SMR" id="Q6F7V8"/>
<dbReference type="STRING" id="202950.GCA_001485005_02986"/>
<dbReference type="KEGG" id="aci:ACIAD3168"/>
<dbReference type="eggNOG" id="COG1295">
    <property type="taxonomic scope" value="Bacteria"/>
</dbReference>
<dbReference type="HOGENOM" id="CLU_032288_1_0_6"/>
<dbReference type="Proteomes" id="UP000000430">
    <property type="component" value="Chromosome"/>
</dbReference>
<dbReference type="GO" id="GO:0005886">
    <property type="term" value="C:plasma membrane"/>
    <property type="evidence" value="ECO:0007669"/>
    <property type="project" value="UniProtKB-SubCell"/>
</dbReference>
<dbReference type="HAMAP" id="MF_00672">
    <property type="entry name" value="UPF0761"/>
    <property type="match status" value="1"/>
</dbReference>
<dbReference type="InterPro" id="IPR023679">
    <property type="entry name" value="UPF0761_bac"/>
</dbReference>
<dbReference type="InterPro" id="IPR017039">
    <property type="entry name" value="Virul_fac_BrkB"/>
</dbReference>
<dbReference type="NCBIfam" id="TIGR00765">
    <property type="entry name" value="yihY_not_rbn"/>
    <property type="match status" value="1"/>
</dbReference>
<dbReference type="PANTHER" id="PTHR30213">
    <property type="entry name" value="INNER MEMBRANE PROTEIN YHJD"/>
    <property type="match status" value="1"/>
</dbReference>
<dbReference type="PANTHER" id="PTHR30213:SF0">
    <property type="entry name" value="UPF0761 MEMBRANE PROTEIN YIHY"/>
    <property type="match status" value="1"/>
</dbReference>
<dbReference type="Pfam" id="PF03631">
    <property type="entry name" value="Virul_fac_BrkB"/>
    <property type="match status" value="1"/>
</dbReference>
<sequence>MGHYFMLNLLKKLPFYEKTWFQFILFVLRRFEADRCREHAGALTYTTLFAVVPMLTVFLVIISSIKALEPARQQLQQLIYSNFLPKSTIAFDRVLNSFTEKSSNLTVIGILFLFVTTVMMLSTIETAFNRIWRVKETRSGIIGFMRYWTIISLGPIILGSAFVISSTVASMNILSNNFAGYELSGAFILWLISFGLTILGFFILYWTIPNRTVPMYAAIIAACFSAAIFELLKNIFGFAMSNFTSYELVYGAFAAIPIFLLWIFLSWNIVLLGVEVSYALTAFHSDKIQTRHPVLMLLDVLELFYKKQKLGQSVTDLEALDIMGRGEIGRWPSYIELLEKQNLIKRTDKDEYVLVRNLSQVDFWTFFTALPYPLPLRKDVGNIHPDDEWMQKIGPALIEADDYLAAKLSIPLSTLFEAK</sequence>
<proteinExistence type="inferred from homology"/>
<accession>Q6F7V8</accession>
<keyword id="KW-0997">Cell inner membrane</keyword>
<keyword id="KW-1003">Cell membrane</keyword>
<keyword id="KW-0472">Membrane</keyword>
<keyword id="KW-0812">Transmembrane</keyword>
<keyword id="KW-1133">Transmembrane helix</keyword>
<feature type="chain" id="PRO_0000391013" description="UPF0761 membrane protein ACIAD3168">
    <location>
        <begin position="1"/>
        <end position="419"/>
    </location>
</feature>
<feature type="transmembrane region" description="Helical" evidence="1">
    <location>
        <begin position="42"/>
        <end position="62"/>
    </location>
</feature>
<feature type="transmembrane region" description="Helical" evidence="1">
    <location>
        <begin position="105"/>
        <end position="125"/>
    </location>
</feature>
<feature type="transmembrane region" description="Helical" evidence="1">
    <location>
        <begin position="148"/>
        <end position="168"/>
    </location>
</feature>
<feature type="transmembrane region" description="Helical" evidence="1">
    <location>
        <begin position="186"/>
        <end position="206"/>
    </location>
</feature>
<feature type="transmembrane region" description="Helical" evidence="1">
    <location>
        <begin position="212"/>
        <end position="232"/>
    </location>
</feature>
<feature type="transmembrane region" description="Helical" evidence="1">
    <location>
        <begin position="252"/>
        <end position="272"/>
    </location>
</feature>
<evidence type="ECO:0000255" key="1">
    <source>
        <dbReference type="HAMAP-Rule" id="MF_00672"/>
    </source>
</evidence>
<organism>
    <name type="scientific">Acinetobacter baylyi (strain ATCC 33305 / BD413 / ADP1)</name>
    <dbReference type="NCBI Taxonomy" id="62977"/>
    <lineage>
        <taxon>Bacteria</taxon>
        <taxon>Pseudomonadati</taxon>
        <taxon>Pseudomonadota</taxon>
        <taxon>Gammaproteobacteria</taxon>
        <taxon>Moraxellales</taxon>
        <taxon>Moraxellaceae</taxon>
        <taxon>Acinetobacter</taxon>
    </lineage>
</organism>
<name>Y3168_ACIAD</name>
<gene>
    <name type="ordered locus">ACIAD3168</name>
</gene>
<protein>
    <recommendedName>
        <fullName evidence="1">UPF0761 membrane protein ACIAD3168</fullName>
    </recommendedName>
</protein>
<reference key="1">
    <citation type="journal article" date="2004" name="Nucleic Acids Res.">
        <title>Unique features revealed by the genome sequence of Acinetobacter sp. ADP1, a versatile and naturally transformation competent bacterium.</title>
        <authorList>
            <person name="Barbe V."/>
            <person name="Vallenet D."/>
            <person name="Fonknechten N."/>
            <person name="Kreimeyer A."/>
            <person name="Oztas S."/>
            <person name="Labarre L."/>
            <person name="Cruveiller S."/>
            <person name="Robert C."/>
            <person name="Duprat S."/>
            <person name="Wincker P."/>
            <person name="Ornston L.N."/>
            <person name="Weissenbach J."/>
            <person name="Marliere P."/>
            <person name="Cohen G.N."/>
            <person name="Medigue C."/>
        </authorList>
    </citation>
    <scope>NUCLEOTIDE SEQUENCE [LARGE SCALE GENOMIC DNA]</scope>
    <source>
        <strain>ATCC 33305 / BD413 / ADP1</strain>
    </source>
</reference>